<reference key="1">
    <citation type="journal article" date="1992" name="Nature">
        <title>Multiple evolutionary origins of prochlorophytes, the chlorophyll b-containing prokaryotes.</title>
        <authorList>
            <person name="Palenik B."/>
            <person name="Haselkorn R."/>
        </authorList>
    </citation>
    <scope>NUCLEOTIDE SEQUENCE [GENOMIC DNA]</scope>
</reference>
<feature type="chain" id="PRO_0000067848" description="DNA-directed RNA polymerase subunit gamma">
    <location>
        <begin position="1" status="less than"/>
        <end position="204" status="greater than"/>
    </location>
</feature>
<feature type="binding site" evidence="2">
    <location>
        <position position="34"/>
    </location>
    <ligand>
        <name>Zn(2+)</name>
        <dbReference type="ChEBI" id="CHEBI:29105"/>
    </ligand>
</feature>
<feature type="binding site" evidence="2">
    <location>
        <position position="36"/>
    </location>
    <ligand>
        <name>Zn(2+)</name>
        <dbReference type="ChEBI" id="CHEBI:29105"/>
    </ligand>
</feature>
<feature type="binding site" evidence="2">
    <location>
        <position position="49"/>
    </location>
    <ligand>
        <name>Zn(2+)</name>
        <dbReference type="ChEBI" id="CHEBI:29105"/>
    </ligand>
</feature>
<feature type="binding site" evidence="2">
    <location>
        <position position="52"/>
    </location>
    <ligand>
        <name>Zn(2+)</name>
        <dbReference type="ChEBI" id="CHEBI:29105"/>
    </ligand>
</feature>
<feature type="non-terminal residue">
    <location>
        <position position="1"/>
    </location>
</feature>
<feature type="non-terminal residue">
    <location>
        <position position="204"/>
    </location>
</feature>
<keyword id="KW-0240">DNA-directed RNA polymerase</keyword>
<keyword id="KW-0479">Metal-binding</keyword>
<keyword id="KW-0548">Nucleotidyltransferase</keyword>
<keyword id="KW-0804">Transcription</keyword>
<keyword id="KW-0808">Transferase</keyword>
<keyword id="KW-0862">Zinc</keyword>
<protein>
    <recommendedName>
        <fullName>DNA-directed RNA polymerase subunit gamma</fullName>
        <shortName>RNAP subunit gamma</shortName>
        <ecNumber>2.7.7.6</ecNumber>
    </recommendedName>
    <alternativeName>
        <fullName>RNA polymerase subunit gamma</fullName>
    </alternativeName>
    <alternativeName>
        <fullName>Transcriptase subunit gamma</fullName>
    </alternativeName>
</protein>
<sequence length="204" mass="23679">EVTKPETINYRTLKPEMDGLFCEKIFGPSKDWECHCGKYKRVRHRGIVCERCGVEVTESRVRRHRMGYIKLAAPVSHVWYLKGIPSYVAILLDIPLRDVEQIVYFNCYVVLDVGDHKDLKYKQLLTEDEWLEIEDEVYAEDSTIENEPVVGIGAEALKQLLEDLDLNQIAEELREEITNSKGQKRAKLIKRIRVIDNFLATNAK</sequence>
<organism>
    <name type="scientific">Prochlorococcus marinus (strain DV1)</name>
    <dbReference type="NCBI Taxonomy" id="45397"/>
    <lineage>
        <taxon>Bacteria</taxon>
        <taxon>Bacillati</taxon>
        <taxon>Cyanobacteriota</taxon>
        <taxon>Cyanophyceae</taxon>
        <taxon>Synechococcales</taxon>
        <taxon>Prochlorococcaceae</taxon>
        <taxon>Prochlorococcus</taxon>
    </lineage>
</organism>
<dbReference type="EC" id="2.7.7.6"/>
<dbReference type="EMBL" id="Z11159">
    <property type="protein sequence ID" value="CAA77510.1"/>
    <property type="molecule type" value="Genomic_DNA"/>
</dbReference>
<dbReference type="SMR" id="P42077"/>
<dbReference type="GO" id="GO:0000428">
    <property type="term" value="C:DNA-directed RNA polymerase complex"/>
    <property type="evidence" value="ECO:0007669"/>
    <property type="project" value="UniProtKB-KW"/>
</dbReference>
<dbReference type="GO" id="GO:0003677">
    <property type="term" value="F:DNA binding"/>
    <property type="evidence" value="ECO:0007669"/>
    <property type="project" value="InterPro"/>
</dbReference>
<dbReference type="GO" id="GO:0003899">
    <property type="term" value="F:DNA-directed RNA polymerase activity"/>
    <property type="evidence" value="ECO:0007669"/>
    <property type="project" value="UniProtKB-EC"/>
</dbReference>
<dbReference type="GO" id="GO:0046872">
    <property type="term" value="F:metal ion binding"/>
    <property type="evidence" value="ECO:0007669"/>
    <property type="project" value="UniProtKB-KW"/>
</dbReference>
<dbReference type="GO" id="GO:0006351">
    <property type="term" value="P:DNA-templated transcription"/>
    <property type="evidence" value="ECO:0007669"/>
    <property type="project" value="InterPro"/>
</dbReference>
<dbReference type="Gene3D" id="4.10.860.120">
    <property type="entry name" value="RNA polymerase II, clamp domain"/>
    <property type="match status" value="1"/>
</dbReference>
<dbReference type="InterPro" id="IPR045867">
    <property type="entry name" value="DNA-dir_RpoC_beta_prime"/>
</dbReference>
<dbReference type="InterPro" id="IPR007080">
    <property type="entry name" value="RNA_pol_Rpb1_1"/>
</dbReference>
<dbReference type="InterPro" id="IPR044893">
    <property type="entry name" value="RNA_pol_Rpb1_clamp_domain"/>
</dbReference>
<dbReference type="PANTHER" id="PTHR19376">
    <property type="entry name" value="DNA-DIRECTED RNA POLYMERASE"/>
    <property type="match status" value="1"/>
</dbReference>
<dbReference type="PANTHER" id="PTHR19376:SF54">
    <property type="entry name" value="DNA-DIRECTED RNA POLYMERASE SUBUNIT BETA"/>
    <property type="match status" value="1"/>
</dbReference>
<dbReference type="Pfam" id="PF04997">
    <property type="entry name" value="RNA_pol_Rpb1_1"/>
    <property type="match status" value="1"/>
</dbReference>
<dbReference type="SUPFAM" id="SSF64484">
    <property type="entry name" value="beta and beta-prime subunits of DNA dependent RNA-polymerase"/>
    <property type="match status" value="1"/>
</dbReference>
<comment type="function">
    <text evidence="1">DNA-dependent RNA polymerase catalyzes the transcription of DNA into RNA using the four ribonucleoside triphosphates as substrates.</text>
</comment>
<comment type="catalytic activity">
    <reaction evidence="2">
        <text>RNA(n) + a ribonucleoside 5'-triphosphate = RNA(n+1) + diphosphate</text>
        <dbReference type="Rhea" id="RHEA:21248"/>
        <dbReference type="Rhea" id="RHEA-COMP:14527"/>
        <dbReference type="Rhea" id="RHEA-COMP:17342"/>
        <dbReference type="ChEBI" id="CHEBI:33019"/>
        <dbReference type="ChEBI" id="CHEBI:61557"/>
        <dbReference type="ChEBI" id="CHEBI:140395"/>
        <dbReference type="EC" id="2.7.7.6"/>
    </reaction>
</comment>
<comment type="cofactor">
    <cofactor evidence="2">
        <name>Zn(2+)</name>
        <dbReference type="ChEBI" id="CHEBI:29105"/>
    </cofactor>
    <text evidence="2">Binds 1 Zn(2+) ion per subunit.</text>
</comment>
<comment type="subunit">
    <text evidence="1">In cyanobacteria the RNAP catalytic core is composed of 2 alpha, 1 beta, 1 beta', 1 gamma and 1 omega subunit. When a sigma factor is associated with the core the holoenzyme is formed, which can initiate transcription (By similarity).</text>
</comment>
<comment type="similarity">
    <text evidence="3">Belongs to the RNA polymerase beta' chain family. RpoC1 subfamily.</text>
</comment>
<name>RPOC1_PROMD</name>
<gene>
    <name type="primary">rpoC1</name>
</gene>
<accession>P42077</accession>
<proteinExistence type="inferred from homology"/>
<evidence type="ECO:0000250" key="1"/>
<evidence type="ECO:0000250" key="2">
    <source>
        <dbReference type="UniProtKB" id="P0A8T7"/>
    </source>
</evidence>
<evidence type="ECO:0000305" key="3"/>